<organism>
    <name type="scientific">Escherichia coli O9:H4 (strain HS)</name>
    <dbReference type="NCBI Taxonomy" id="331112"/>
    <lineage>
        <taxon>Bacteria</taxon>
        <taxon>Pseudomonadati</taxon>
        <taxon>Pseudomonadota</taxon>
        <taxon>Gammaproteobacteria</taxon>
        <taxon>Enterobacterales</taxon>
        <taxon>Enterobacteriaceae</taxon>
        <taxon>Escherichia</taxon>
    </lineage>
</organism>
<sequence>MELKDYYAIMGVKPTDDLKTIKTAYRRLARKYHPDVSKEPDAEARFKEVAEAWEVLSDEQRRAEYDQMWQHRNDPQFNRQFHHGDGQSFNAEDFDDIFSSIFGQHARQSRQRPATRGHDIEIEVAVFLEETLTEHKRTISYNLPVYNAFGMIEQEIPKTLNVKIPAGVGNGQRIRLKGQGTPGENGGPNGDLWLVIHIAPHPLFDIVGQDLEIVVPVSPWEAALGAKVTVPTLKESILLTIPPGSQAGQRLRVKGKGLVSKKQTGDLYAVLKIVMPPKPDENTAALWQQLADAQSSFDPRKDWGKA</sequence>
<comment type="function">
    <text evidence="1">DNA-binding protein that preferentially recognizes a curved DNA sequence. It is probably a functional analog of DnaJ; displays overlapping activities with DnaJ, but functions under different conditions, probably acting as a molecular chaperone in an adaptive response to environmental stresses other than heat shock. Lacks autonomous chaperone activity; binds native substrates and targets them for recognition by DnaK. Its activity is inhibited by the binding of CbpM.</text>
</comment>
<comment type="subcellular location">
    <subcellularLocation>
        <location evidence="1">Cytoplasm</location>
        <location evidence="1">Nucleoid</location>
    </subcellularLocation>
</comment>
<name>CBPA_ECOHS</name>
<proteinExistence type="inferred from homology"/>
<reference key="1">
    <citation type="journal article" date="2008" name="J. Bacteriol.">
        <title>The pangenome structure of Escherichia coli: comparative genomic analysis of E. coli commensal and pathogenic isolates.</title>
        <authorList>
            <person name="Rasko D.A."/>
            <person name="Rosovitz M.J."/>
            <person name="Myers G.S.A."/>
            <person name="Mongodin E.F."/>
            <person name="Fricke W.F."/>
            <person name="Gajer P."/>
            <person name="Crabtree J."/>
            <person name="Sebaihia M."/>
            <person name="Thomson N.R."/>
            <person name="Chaudhuri R."/>
            <person name="Henderson I.R."/>
            <person name="Sperandio V."/>
            <person name="Ravel J."/>
        </authorList>
    </citation>
    <scope>NUCLEOTIDE SEQUENCE [LARGE SCALE GENOMIC DNA]</scope>
    <source>
        <strain>HS</strain>
    </source>
</reference>
<gene>
    <name evidence="1" type="primary">cbpA</name>
    <name type="ordered locus">EcHS_A1112</name>
</gene>
<dbReference type="EMBL" id="CP000802">
    <property type="protein sequence ID" value="ABV05456.1"/>
    <property type="molecule type" value="Genomic_DNA"/>
</dbReference>
<dbReference type="RefSeq" id="WP_000420621.1">
    <property type="nucleotide sequence ID" value="NC_009800.1"/>
</dbReference>
<dbReference type="BMRB" id="A7ZYV2"/>
<dbReference type="SMR" id="A7ZYV2"/>
<dbReference type="GeneID" id="86863513"/>
<dbReference type="KEGG" id="ecx:EcHS_A1112"/>
<dbReference type="HOGENOM" id="CLU_017633_0_0_6"/>
<dbReference type="GO" id="GO:0005737">
    <property type="term" value="C:cytoplasm"/>
    <property type="evidence" value="ECO:0007669"/>
    <property type="project" value="UniProtKB-UniRule"/>
</dbReference>
<dbReference type="GO" id="GO:0009295">
    <property type="term" value="C:nucleoid"/>
    <property type="evidence" value="ECO:0007669"/>
    <property type="project" value="UniProtKB-SubCell"/>
</dbReference>
<dbReference type="GO" id="GO:0003681">
    <property type="term" value="F:bent DNA binding"/>
    <property type="evidence" value="ECO:0007669"/>
    <property type="project" value="UniProtKB-UniRule"/>
</dbReference>
<dbReference type="GO" id="GO:0051082">
    <property type="term" value="F:unfolded protein binding"/>
    <property type="evidence" value="ECO:0007669"/>
    <property type="project" value="InterPro"/>
</dbReference>
<dbReference type="GO" id="GO:0051085">
    <property type="term" value="P:chaperone cofactor-dependent protein refolding"/>
    <property type="evidence" value="ECO:0007669"/>
    <property type="project" value="TreeGrafter"/>
</dbReference>
<dbReference type="GO" id="GO:0042026">
    <property type="term" value="P:protein refolding"/>
    <property type="evidence" value="ECO:0007669"/>
    <property type="project" value="TreeGrafter"/>
</dbReference>
<dbReference type="CDD" id="cd06257">
    <property type="entry name" value="DnaJ"/>
    <property type="match status" value="1"/>
</dbReference>
<dbReference type="CDD" id="cd10747">
    <property type="entry name" value="DnaJ_C"/>
    <property type="match status" value="1"/>
</dbReference>
<dbReference type="FunFam" id="1.10.287.110:FF:000013">
    <property type="entry name" value="Curved DNA-binding protein"/>
    <property type="match status" value="1"/>
</dbReference>
<dbReference type="FunFam" id="2.60.260.20:FF:000008">
    <property type="entry name" value="Curved DNA-binding protein"/>
    <property type="match status" value="1"/>
</dbReference>
<dbReference type="FunFam" id="2.60.260.20:FF:000010">
    <property type="entry name" value="Curved DNA-binding protein"/>
    <property type="match status" value="1"/>
</dbReference>
<dbReference type="Gene3D" id="1.10.287.110">
    <property type="entry name" value="DnaJ domain"/>
    <property type="match status" value="1"/>
</dbReference>
<dbReference type="Gene3D" id="1.20.5.460">
    <property type="entry name" value="Single helix bin"/>
    <property type="match status" value="1"/>
</dbReference>
<dbReference type="Gene3D" id="2.60.260.20">
    <property type="entry name" value="Urease metallochaperone UreE, N-terminal domain"/>
    <property type="match status" value="2"/>
</dbReference>
<dbReference type="HAMAP" id="MF_01154">
    <property type="entry name" value="CbpA"/>
    <property type="match status" value="1"/>
</dbReference>
<dbReference type="InterPro" id="IPR023859">
    <property type="entry name" value="DNA-bd_curved-DNA"/>
</dbReference>
<dbReference type="InterPro" id="IPR002939">
    <property type="entry name" value="DnaJ_C"/>
</dbReference>
<dbReference type="InterPro" id="IPR001623">
    <property type="entry name" value="DnaJ_domain"/>
</dbReference>
<dbReference type="InterPro" id="IPR018253">
    <property type="entry name" value="DnaJ_domain_CS"/>
</dbReference>
<dbReference type="InterPro" id="IPR008971">
    <property type="entry name" value="HSP40/DnaJ_pept-bd"/>
</dbReference>
<dbReference type="InterPro" id="IPR036869">
    <property type="entry name" value="J_dom_sf"/>
</dbReference>
<dbReference type="NCBIfam" id="NF007618">
    <property type="entry name" value="PRK10266.1"/>
    <property type="match status" value="1"/>
</dbReference>
<dbReference type="PANTHER" id="PTHR43096">
    <property type="entry name" value="DNAJ HOMOLOG 1, MITOCHONDRIAL-RELATED"/>
    <property type="match status" value="1"/>
</dbReference>
<dbReference type="PANTHER" id="PTHR43096:SF52">
    <property type="entry name" value="DNAJ HOMOLOG 1, MITOCHONDRIAL-RELATED"/>
    <property type="match status" value="1"/>
</dbReference>
<dbReference type="Pfam" id="PF00226">
    <property type="entry name" value="DnaJ"/>
    <property type="match status" value="1"/>
</dbReference>
<dbReference type="Pfam" id="PF01556">
    <property type="entry name" value="DnaJ_C"/>
    <property type="match status" value="1"/>
</dbReference>
<dbReference type="PRINTS" id="PR00625">
    <property type="entry name" value="JDOMAIN"/>
</dbReference>
<dbReference type="SMART" id="SM00271">
    <property type="entry name" value="DnaJ"/>
    <property type="match status" value="1"/>
</dbReference>
<dbReference type="SUPFAM" id="SSF46565">
    <property type="entry name" value="Chaperone J-domain"/>
    <property type="match status" value="1"/>
</dbReference>
<dbReference type="SUPFAM" id="SSF49493">
    <property type="entry name" value="HSP40/DnaJ peptide-binding domain"/>
    <property type="match status" value="2"/>
</dbReference>
<dbReference type="PROSITE" id="PS00636">
    <property type="entry name" value="DNAJ_1"/>
    <property type="match status" value="1"/>
</dbReference>
<dbReference type="PROSITE" id="PS50076">
    <property type="entry name" value="DNAJ_2"/>
    <property type="match status" value="1"/>
</dbReference>
<evidence type="ECO:0000255" key="1">
    <source>
        <dbReference type="HAMAP-Rule" id="MF_01154"/>
    </source>
</evidence>
<accession>A7ZYV2</accession>
<protein>
    <recommendedName>
        <fullName evidence="1">Curved DNA-binding protein</fullName>
    </recommendedName>
</protein>
<feature type="chain" id="PRO_1000065527" description="Curved DNA-binding protein">
    <location>
        <begin position="1"/>
        <end position="306"/>
    </location>
</feature>
<feature type="domain" description="J" evidence="1">
    <location>
        <begin position="5"/>
        <end position="69"/>
    </location>
</feature>
<keyword id="KW-0143">Chaperone</keyword>
<keyword id="KW-0963">Cytoplasm</keyword>
<keyword id="KW-0238">DNA-binding</keyword>